<gene>
    <name type="ordered locus">MJ0833</name>
</gene>
<accession>Q58243</accession>
<name>Y833_METJA</name>
<dbReference type="EMBL" id="L77117">
    <property type="protein sequence ID" value="AAB98836.1"/>
    <property type="molecule type" value="Genomic_DNA"/>
</dbReference>
<dbReference type="PIR" id="A64404">
    <property type="entry name" value="A64404"/>
</dbReference>
<dbReference type="FunCoup" id="Q58243">
    <property type="interactions" value="3"/>
</dbReference>
<dbReference type="STRING" id="243232.MJ_0833"/>
<dbReference type="PaxDb" id="243232-MJ_0833"/>
<dbReference type="EnsemblBacteria" id="AAB98836">
    <property type="protein sequence ID" value="AAB98836"/>
    <property type="gene ID" value="MJ_0833"/>
</dbReference>
<dbReference type="KEGG" id="mja:MJ_0833"/>
<dbReference type="eggNOG" id="arCOG05054">
    <property type="taxonomic scope" value="Archaea"/>
</dbReference>
<dbReference type="HOGENOM" id="CLU_978658_0_0_2"/>
<dbReference type="InParanoid" id="Q58243"/>
<dbReference type="OrthoDB" id="66027at2157"/>
<dbReference type="Proteomes" id="UP000000805">
    <property type="component" value="Chromosome"/>
</dbReference>
<organism>
    <name type="scientific">Methanocaldococcus jannaschii (strain ATCC 43067 / DSM 2661 / JAL-1 / JCM 10045 / NBRC 100440)</name>
    <name type="common">Methanococcus jannaschii</name>
    <dbReference type="NCBI Taxonomy" id="243232"/>
    <lineage>
        <taxon>Archaea</taxon>
        <taxon>Methanobacteriati</taxon>
        <taxon>Methanobacteriota</taxon>
        <taxon>Methanomada group</taxon>
        <taxon>Methanococci</taxon>
        <taxon>Methanococcales</taxon>
        <taxon>Methanocaldococcaceae</taxon>
        <taxon>Methanocaldococcus</taxon>
    </lineage>
</organism>
<sequence>MFMKSLIKLIVFIVLCSLFLHSICGERTIAEMSITYKLTGEITNTNPYSIFVAVPSNITFEEKTLPKPEDFLDVSTSVTQTSGIVFYKTIFNGKEGFWIPPYTTVKINIYHYTPITYDIKIDESQENYDVVGPAVVNKVNVIDLNKLFPDAKYEGIKIGKFKLYVSGYIVKGNDTESLSIIVPAPLVIDNYDEFHKFGDDNVDIWISSYNEWYKNQMERENIHIDNNDPLIPKMDNDVLGDDTHFKFKIFDVPAMAFTTSSNQPIRFYYIIYYKYNN</sequence>
<protein>
    <recommendedName>
        <fullName>Uncharacterized protein MJ0833</fullName>
    </recommendedName>
</protein>
<feature type="chain" id="PRO_0000107068" description="Uncharacterized protein MJ0833">
    <location>
        <begin position="1"/>
        <end position="277"/>
    </location>
</feature>
<keyword id="KW-1185">Reference proteome</keyword>
<reference key="1">
    <citation type="journal article" date="1996" name="Science">
        <title>Complete genome sequence of the methanogenic archaeon, Methanococcus jannaschii.</title>
        <authorList>
            <person name="Bult C.J."/>
            <person name="White O."/>
            <person name="Olsen G.J."/>
            <person name="Zhou L."/>
            <person name="Fleischmann R.D."/>
            <person name="Sutton G.G."/>
            <person name="Blake J.A."/>
            <person name="FitzGerald L.M."/>
            <person name="Clayton R.A."/>
            <person name="Gocayne J.D."/>
            <person name="Kerlavage A.R."/>
            <person name="Dougherty B.A."/>
            <person name="Tomb J.-F."/>
            <person name="Adams M.D."/>
            <person name="Reich C.I."/>
            <person name="Overbeek R."/>
            <person name="Kirkness E.F."/>
            <person name="Weinstock K.G."/>
            <person name="Merrick J.M."/>
            <person name="Glodek A."/>
            <person name="Scott J.L."/>
            <person name="Geoghagen N.S.M."/>
            <person name="Weidman J.F."/>
            <person name="Fuhrmann J.L."/>
            <person name="Nguyen D."/>
            <person name="Utterback T.R."/>
            <person name="Kelley J.M."/>
            <person name="Peterson J.D."/>
            <person name="Sadow P.W."/>
            <person name="Hanna M.C."/>
            <person name="Cotton M.D."/>
            <person name="Roberts K.M."/>
            <person name="Hurst M.A."/>
            <person name="Kaine B.P."/>
            <person name="Borodovsky M."/>
            <person name="Klenk H.-P."/>
            <person name="Fraser C.M."/>
            <person name="Smith H.O."/>
            <person name="Woese C.R."/>
            <person name="Venter J.C."/>
        </authorList>
    </citation>
    <scope>NUCLEOTIDE SEQUENCE [LARGE SCALE GENOMIC DNA]</scope>
    <source>
        <strain>ATCC 43067 / DSM 2661 / JAL-1 / JCM 10045 / NBRC 100440</strain>
    </source>
</reference>
<proteinExistence type="predicted"/>